<geneLocation type="mitochondrion"/>
<name>NU4LM_ARCTO</name>
<keyword id="KW-0249">Electron transport</keyword>
<keyword id="KW-0472">Membrane</keyword>
<keyword id="KW-0496">Mitochondrion</keyword>
<keyword id="KW-0999">Mitochondrion inner membrane</keyword>
<keyword id="KW-0520">NAD</keyword>
<keyword id="KW-0679">Respiratory chain</keyword>
<keyword id="KW-1278">Translocase</keyword>
<keyword id="KW-0812">Transmembrane</keyword>
<keyword id="KW-1133">Transmembrane helix</keyword>
<keyword id="KW-0813">Transport</keyword>
<keyword id="KW-0830">Ubiquinone</keyword>
<proteinExistence type="inferred from homology"/>
<comment type="function">
    <text evidence="1">Core subunit of the mitochondrial membrane respiratory chain NADH dehydrogenase (Complex I) which catalyzes electron transfer from NADH through the respiratory chain, using ubiquinone as an electron acceptor. Part of the enzyme membrane arm which is embedded in the lipid bilayer and involved in proton translocation.</text>
</comment>
<comment type="catalytic activity">
    <reaction evidence="1">
        <text>a ubiquinone + NADH + 5 H(+)(in) = a ubiquinol + NAD(+) + 4 H(+)(out)</text>
        <dbReference type="Rhea" id="RHEA:29091"/>
        <dbReference type="Rhea" id="RHEA-COMP:9565"/>
        <dbReference type="Rhea" id="RHEA-COMP:9566"/>
        <dbReference type="ChEBI" id="CHEBI:15378"/>
        <dbReference type="ChEBI" id="CHEBI:16389"/>
        <dbReference type="ChEBI" id="CHEBI:17976"/>
        <dbReference type="ChEBI" id="CHEBI:57540"/>
        <dbReference type="ChEBI" id="CHEBI:57945"/>
        <dbReference type="EC" id="7.1.1.2"/>
    </reaction>
    <physiologicalReaction direction="left-to-right" evidence="1">
        <dbReference type="Rhea" id="RHEA:29092"/>
    </physiologicalReaction>
</comment>
<comment type="subunit">
    <text evidence="2">Core subunit of respiratory chain NADH dehydrogenase (Complex I) which is composed of 45 different subunits.</text>
</comment>
<comment type="subcellular location">
    <subcellularLocation>
        <location evidence="2">Mitochondrion inner membrane</location>
        <topology evidence="3">Multi-pass membrane protein</topology>
    </subcellularLocation>
</comment>
<comment type="similarity">
    <text evidence="4">Belongs to the complex I subunit 4L family.</text>
</comment>
<dbReference type="EC" id="7.1.1.2"/>
<dbReference type="EMBL" id="AM181021">
    <property type="protein sequence ID" value="CAJ56944.1"/>
    <property type="molecule type" value="Genomic_DNA"/>
</dbReference>
<dbReference type="RefSeq" id="YP_778755.1">
    <property type="nucleotide sequence ID" value="NC_008420.1"/>
</dbReference>
<dbReference type="SMR" id="Q08HF4"/>
<dbReference type="GeneID" id="4356434"/>
<dbReference type="CTD" id="4539"/>
<dbReference type="GO" id="GO:0005743">
    <property type="term" value="C:mitochondrial inner membrane"/>
    <property type="evidence" value="ECO:0000250"/>
    <property type="project" value="UniProtKB"/>
</dbReference>
<dbReference type="GO" id="GO:0045271">
    <property type="term" value="C:respiratory chain complex I"/>
    <property type="evidence" value="ECO:0000250"/>
    <property type="project" value="UniProtKB"/>
</dbReference>
<dbReference type="GO" id="GO:0008137">
    <property type="term" value="F:NADH dehydrogenase (ubiquinone) activity"/>
    <property type="evidence" value="ECO:0000250"/>
    <property type="project" value="UniProtKB"/>
</dbReference>
<dbReference type="GO" id="GO:0042773">
    <property type="term" value="P:ATP synthesis coupled electron transport"/>
    <property type="evidence" value="ECO:0007669"/>
    <property type="project" value="InterPro"/>
</dbReference>
<dbReference type="FunFam" id="1.10.287.3510:FF:000002">
    <property type="entry name" value="NADH-ubiquinone oxidoreductase chain 4L"/>
    <property type="match status" value="1"/>
</dbReference>
<dbReference type="Gene3D" id="1.10.287.3510">
    <property type="match status" value="1"/>
</dbReference>
<dbReference type="InterPro" id="IPR001133">
    <property type="entry name" value="NADH_UbQ_OxRdtase_chain4L/K"/>
</dbReference>
<dbReference type="InterPro" id="IPR039428">
    <property type="entry name" value="NUOK/Mnh_C1-like"/>
</dbReference>
<dbReference type="PANTHER" id="PTHR11434:SF0">
    <property type="entry name" value="NADH-UBIQUINONE OXIDOREDUCTASE CHAIN 4L"/>
    <property type="match status" value="1"/>
</dbReference>
<dbReference type="PANTHER" id="PTHR11434">
    <property type="entry name" value="NADH-UBIQUINONE OXIDOREDUCTASE SUBUNIT ND4L"/>
    <property type="match status" value="1"/>
</dbReference>
<dbReference type="Pfam" id="PF00420">
    <property type="entry name" value="Oxidored_q2"/>
    <property type="match status" value="1"/>
</dbReference>
<reference key="1">
    <citation type="journal article" date="2006" name="Mol. Phylogenet. Evol.">
        <title>Pinniped phylogeny and a new hypothesis for their origin and dispersal.</title>
        <authorList>
            <person name="Arnason U."/>
            <person name="Gullberg A."/>
            <person name="Janke A."/>
            <person name="Kullberg M."/>
            <person name="Lehman N."/>
            <person name="Petrov E.A."/>
            <person name="Vainola R."/>
        </authorList>
    </citation>
    <scope>NUCLEOTIDE SEQUENCE [GENOMIC DNA]</scope>
</reference>
<organism>
    <name type="scientific">Arctocephalus townsendi</name>
    <name type="common">Guadalupe fur seal</name>
    <name type="synonym">Arctocephalus philippii subsp. townsendi</name>
    <dbReference type="NCBI Taxonomy" id="161921"/>
    <lineage>
        <taxon>Eukaryota</taxon>
        <taxon>Metazoa</taxon>
        <taxon>Chordata</taxon>
        <taxon>Craniata</taxon>
        <taxon>Vertebrata</taxon>
        <taxon>Euteleostomi</taxon>
        <taxon>Mammalia</taxon>
        <taxon>Eutheria</taxon>
        <taxon>Laurasiatheria</taxon>
        <taxon>Carnivora</taxon>
        <taxon>Caniformia</taxon>
        <taxon>Pinnipedia</taxon>
        <taxon>Otariidae</taxon>
        <taxon>Arctocephalus</taxon>
    </lineage>
</organism>
<evidence type="ECO:0000250" key="1">
    <source>
        <dbReference type="UniProtKB" id="P03901"/>
    </source>
</evidence>
<evidence type="ECO:0000250" key="2">
    <source>
        <dbReference type="UniProtKB" id="P03902"/>
    </source>
</evidence>
<evidence type="ECO:0000255" key="3"/>
<evidence type="ECO:0000305" key="4"/>
<sequence>MSMVYFNIFMAFTVSFVGLLMYRSHLMSSLLCLEGMMLSLFVMMSMTILNNHFTLASMAPIILLVFAACEAALGLSLLVMVSNTYGTDYVQNLNLLQC</sequence>
<protein>
    <recommendedName>
        <fullName>NADH-ubiquinone oxidoreductase chain 4L</fullName>
        <ecNumber>7.1.1.2</ecNumber>
    </recommendedName>
    <alternativeName>
        <fullName>NADH dehydrogenase subunit 4L</fullName>
    </alternativeName>
</protein>
<accession>Q08HF4</accession>
<feature type="chain" id="PRO_0000274974" description="NADH-ubiquinone oxidoreductase chain 4L">
    <location>
        <begin position="1"/>
        <end position="98"/>
    </location>
</feature>
<feature type="transmembrane region" description="Helical" evidence="3">
    <location>
        <begin position="1"/>
        <end position="21"/>
    </location>
</feature>
<feature type="transmembrane region" description="Helical" evidence="3">
    <location>
        <begin position="29"/>
        <end position="49"/>
    </location>
</feature>
<feature type="transmembrane region" description="Helical" evidence="3">
    <location>
        <begin position="61"/>
        <end position="81"/>
    </location>
</feature>
<gene>
    <name type="primary">MT-ND4L</name>
    <name type="synonym">MTND4L</name>
    <name type="synonym">NADH4L</name>
    <name type="synonym">ND4L</name>
</gene>